<feature type="chain" id="PRO_0000218441" description="Alpha-acetolactate decarboxylase">
    <location>
        <begin position="1"/>
        <end position="236"/>
    </location>
</feature>
<proteinExistence type="inferred from homology"/>
<accession>P95676</accession>
<keyword id="KW-0005">Acetoin biosynthesis</keyword>
<keyword id="KW-0210">Decarboxylase</keyword>
<keyword id="KW-0456">Lyase</keyword>
<keyword id="KW-1185">Reference proteome</keyword>
<name>ALDC_LACLA</name>
<protein>
    <recommendedName>
        <fullName>Alpha-acetolactate decarboxylase</fullName>
        <ecNumber>4.1.1.5</ecNumber>
    </recommendedName>
</protein>
<organism>
    <name type="scientific">Lactococcus lactis subsp. lactis (strain IL1403)</name>
    <name type="common">Streptococcus lactis</name>
    <dbReference type="NCBI Taxonomy" id="272623"/>
    <lineage>
        <taxon>Bacteria</taxon>
        <taxon>Bacillati</taxon>
        <taxon>Bacillota</taxon>
        <taxon>Bacilli</taxon>
        <taxon>Lactobacillales</taxon>
        <taxon>Streptococcaceae</taxon>
        <taxon>Lactococcus</taxon>
    </lineage>
</organism>
<gene>
    <name type="primary">aldB</name>
    <name type="ordered locus">LL1228</name>
    <name type="ORF">L0321</name>
</gene>
<comment type="function">
    <text>Converts acetolactate into acetoin.</text>
</comment>
<comment type="catalytic activity">
    <reaction>
        <text>(2S)-2-acetolactate + H(+) = (R)-acetoin + CO2</text>
        <dbReference type="Rhea" id="RHEA:21580"/>
        <dbReference type="ChEBI" id="CHEBI:15378"/>
        <dbReference type="ChEBI" id="CHEBI:15686"/>
        <dbReference type="ChEBI" id="CHEBI:16526"/>
        <dbReference type="ChEBI" id="CHEBI:58476"/>
        <dbReference type="EC" id="4.1.1.5"/>
    </reaction>
</comment>
<comment type="pathway">
    <text>Polyol metabolism; (R,R)-butane-2,3-diol biosynthesis; (R,R)-butane-2,3-diol from pyruvate: step 2/3.</text>
</comment>
<comment type="similarity">
    <text evidence="1">Belongs to the alpha-acetolactate decarboxylase family.</text>
</comment>
<evidence type="ECO:0000305" key="1"/>
<reference key="1">
    <citation type="journal article" date="1996" name="Appl. Environ. Microbiol.">
        <title>Imbalance of leucine flux in Lactococcus lactis and its use for the isolation of diacetyl-overproducing strains.</title>
        <authorList>
            <person name="Goupil N."/>
            <person name="Corthier G."/>
            <person name="Ehrlich S.D."/>
            <person name="Renault P."/>
        </authorList>
    </citation>
    <scope>NUCLEOTIDE SEQUENCE [GENOMIC DNA]</scope>
    <source>
        <strain>NCDO 2118</strain>
    </source>
</reference>
<reference key="2">
    <citation type="journal article" date="1997" name="J. Bacteriol.">
        <title>Dual role of alpha-acetolactate decarboxylase in Lactococcus lactis subsp. lactis.</title>
        <authorList>
            <person name="Goupil-Feuillerat N."/>
            <person name="Cocaign-Bousquet M."/>
            <person name="Godon J.-J."/>
            <person name="Ehrlich S.D."/>
            <person name="Renault P."/>
        </authorList>
    </citation>
    <scope>NUCLEOTIDE SEQUENCE [GENOMIC DNA]</scope>
    <source>
        <strain>NCDO 2118</strain>
    </source>
</reference>
<reference key="3">
    <citation type="journal article" date="2001" name="Genome Res.">
        <title>The complete genome sequence of the lactic acid bacterium Lactococcus lactis ssp. lactis IL1403.</title>
        <authorList>
            <person name="Bolotin A."/>
            <person name="Wincker P."/>
            <person name="Mauger S."/>
            <person name="Jaillon O."/>
            <person name="Malarme K."/>
            <person name="Weissenbach J."/>
            <person name="Ehrlich S.D."/>
            <person name="Sorokin A."/>
        </authorList>
    </citation>
    <scope>NUCLEOTIDE SEQUENCE [LARGE SCALE GENOMIC DNA]</scope>
    <source>
        <strain>IL1403</strain>
    </source>
</reference>
<sequence length="236" mass="26353">MTEITQLFQYNTLGALMAGLYEGTMTIGELLKHGDLGIGTLDSVDGELIVLDGKAYQAKGDKTIVELTDDIKVPYAAVVPHQAEVVFKQKFTASDKELEDRIESYFDGQNLFRSIKITGEFPKMHVRMIPRAKSGTRFVEVSQNQPEYTEENVKGTIVGIWTPEMFHGVSVAGYHLHFISEDFTFGGHVLDFIIDNGTVEIGAIDQLNQSFPVQDRKFLFADLDIEALKKDIDVAE</sequence>
<dbReference type="EC" id="4.1.1.5"/>
<dbReference type="EMBL" id="S82499">
    <property type="protein sequence ID" value="AAB37482.1"/>
    <property type="molecule type" value="Genomic_DNA"/>
</dbReference>
<dbReference type="EMBL" id="U92974">
    <property type="protein sequence ID" value="AAB81923.1"/>
    <property type="molecule type" value="Genomic_DNA"/>
</dbReference>
<dbReference type="EMBL" id="AE005176">
    <property type="protein sequence ID" value="AAK05326.1"/>
    <property type="molecule type" value="Genomic_DNA"/>
</dbReference>
<dbReference type="PIR" id="D86778">
    <property type="entry name" value="D86778"/>
</dbReference>
<dbReference type="RefSeq" id="NP_267384.1">
    <property type="nucleotide sequence ID" value="NC_002662.1"/>
</dbReference>
<dbReference type="SMR" id="P95676"/>
<dbReference type="PaxDb" id="272623-L0321"/>
<dbReference type="EnsemblBacteria" id="AAK05326">
    <property type="protein sequence ID" value="AAK05326"/>
    <property type="gene ID" value="L0321"/>
</dbReference>
<dbReference type="KEGG" id="lla:L0321"/>
<dbReference type="PATRIC" id="fig|272623.7.peg.1328"/>
<dbReference type="eggNOG" id="COG3527">
    <property type="taxonomic scope" value="Bacteria"/>
</dbReference>
<dbReference type="HOGENOM" id="CLU_072561_0_0_9"/>
<dbReference type="OrthoDB" id="8612680at2"/>
<dbReference type="BioCyc" id="MetaCyc:MONOMER-8702"/>
<dbReference type="UniPathway" id="UPA00626">
    <property type="reaction ID" value="UER00678"/>
</dbReference>
<dbReference type="Proteomes" id="UP000002196">
    <property type="component" value="Chromosome"/>
</dbReference>
<dbReference type="GO" id="GO:0047605">
    <property type="term" value="F:acetolactate decarboxylase activity"/>
    <property type="evidence" value="ECO:0007669"/>
    <property type="project" value="UniProtKB-EC"/>
</dbReference>
<dbReference type="GO" id="GO:0045151">
    <property type="term" value="P:acetoin biosynthetic process"/>
    <property type="evidence" value="ECO:0007669"/>
    <property type="project" value="UniProtKB-KW"/>
</dbReference>
<dbReference type="CDD" id="cd17299">
    <property type="entry name" value="acetolactate_decarboxylase"/>
    <property type="match status" value="1"/>
</dbReference>
<dbReference type="Gene3D" id="3.30.1330.80">
    <property type="entry name" value="Hypothetical protein, similar to alpha- acetolactate decarboxylase, domain 2"/>
    <property type="match status" value="2"/>
</dbReference>
<dbReference type="InterPro" id="IPR005128">
    <property type="entry name" value="Acetolactate_a_deCO2ase"/>
</dbReference>
<dbReference type="NCBIfam" id="TIGR01252">
    <property type="entry name" value="acetolac_decarb"/>
    <property type="match status" value="1"/>
</dbReference>
<dbReference type="PANTHER" id="PTHR35524">
    <property type="entry name" value="ALPHA-ACETOLACTATE DECARBOXYLASE"/>
    <property type="match status" value="1"/>
</dbReference>
<dbReference type="PANTHER" id="PTHR35524:SF1">
    <property type="entry name" value="ALPHA-ACETOLACTATE DECARBOXYLASE"/>
    <property type="match status" value="1"/>
</dbReference>
<dbReference type="Pfam" id="PF03306">
    <property type="entry name" value="AAL_decarboxy"/>
    <property type="match status" value="1"/>
</dbReference>
<dbReference type="PIRSF" id="PIRSF001332">
    <property type="entry name" value="Acetolac_decarb"/>
    <property type="match status" value="1"/>
</dbReference>
<dbReference type="SUPFAM" id="SSF117856">
    <property type="entry name" value="AF0104/ALDC/Ptd012-like"/>
    <property type="match status" value="1"/>
</dbReference>